<dbReference type="EC" id="2.7.7.6" evidence="1"/>
<dbReference type="EMBL" id="CP000414">
    <property type="protein sequence ID" value="ABJ62714.1"/>
    <property type="molecule type" value="Genomic_DNA"/>
</dbReference>
<dbReference type="RefSeq" id="WP_011680267.1">
    <property type="nucleotide sequence ID" value="NC_008531.1"/>
</dbReference>
<dbReference type="SMR" id="Q03VQ8"/>
<dbReference type="EnsemblBacteria" id="ABJ62714">
    <property type="protein sequence ID" value="ABJ62714"/>
    <property type="gene ID" value="LEUM_1622"/>
</dbReference>
<dbReference type="GeneID" id="29577738"/>
<dbReference type="KEGG" id="lme:LEUM_1622"/>
<dbReference type="eggNOG" id="COG5503">
    <property type="taxonomic scope" value="Bacteria"/>
</dbReference>
<dbReference type="HOGENOM" id="CLU_187518_0_0_9"/>
<dbReference type="Proteomes" id="UP000000362">
    <property type="component" value="Chromosome"/>
</dbReference>
<dbReference type="GO" id="GO:0000428">
    <property type="term" value="C:DNA-directed RNA polymerase complex"/>
    <property type="evidence" value="ECO:0007669"/>
    <property type="project" value="UniProtKB-KW"/>
</dbReference>
<dbReference type="GO" id="GO:0003677">
    <property type="term" value="F:DNA binding"/>
    <property type="evidence" value="ECO:0007669"/>
    <property type="project" value="UniProtKB-UniRule"/>
</dbReference>
<dbReference type="GO" id="GO:0003899">
    <property type="term" value="F:DNA-directed RNA polymerase activity"/>
    <property type="evidence" value="ECO:0007669"/>
    <property type="project" value="UniProtKB-UniRule"/>
</dbReference>
<dbReference type="GO" id="GO:0006351">
    <property type="term" value="P:DNA-templated transcription"/>
    <property type="evidence" value="ECO:0007669"/>
    <property type="project" value="UniProtKB-UniRule"/>
</dbReference>
<dbReference type="Gene3D" id="3.10.20.730">
    <property type="entry name" value="RNAP, epsilon subunit-like"/>
    <property type="match status" value="1"/>
</dbReference>
<dbReference type="HAMAP" id="MF_01553">
    <property type="entry name" value="RNApol_bact_RpoY"/>
    <property type="match status" value="1"/>
</dbReference>
<dbReference type="InterPro" id="IPR009907">
    <property type="entry name" value="RpoY"/>
</dbReference>
<dbReference type="NCBIfam" id="NF010188">
    <property type="entry name" value="PRK13667.1"/>
    <property type="match status" value="1"/>
</dbReference>
<dbReference type="Pfam" id="PF07288">
    <property type="entry name" value="RpoY"/>
    <property type="match status" value="1"/>
</dbReference>
<accession>Q03VQ8</accession>
<name>RPOY_LEUMM</name>
<reference key="1">
    <citation type="journal article" date="2006" name="Proc. Natl. Acad. Sci. U.S.A.">
        <title>Comparative genomics of the lactic acid bacteria.</title>
        <authorList>
            <person name="Makarova K.S."/>
            <person name="Slesarev A."/>
            <person name="Wolf Y.I."/>
            <person name="Sorokin A."/>
            <person name="Mirkin B."/>
            <person name="Koonin E.V."/>
            <person name="Pavlov A."/>
            <person name="Pavlova N."/>
            <person name="Karamychev V."/>
            <person name="Polouchine N."/>
            <person name="Shakhova V."/>
            <person name="Grigoriev I."/>
            <person name="Lou Y."/>
            <person name="Rohksar D."/>
            <person name="Lucas S."/>
            <person name="Huang K."/>
            <person name="Goodstein D.M."/>
            <person name="Hawkins T."/>
            <person name="Plengvidhya V."/>
            <person name="Welker D."/>
            <person name="Hughes J."/>
            <person name="Goh Y."/>
            <person name="Benson A."/>
            <person name="Baldwin K."/>
            <person name="Lee J.-H."/>
            <person name="Diaz-Muniz I."/>
            <person name="Dosti B."/>
            <person name="Smeianov V."/>
            <person name="Wechter W."/>
            <person name="Barabote R."/>
            <person name="Lorca G."/>
            <person name="Altermann E."/>
            <person name="Barrangou R."/>
            <person name="Ganesan B."/>
            <person name="Xie Y."/>
            <person name="Rawsthorne H."/>
            <person name="Tamir D."/>
            <person name="Parker C."/>
            <person name="Breidt F."/>
            <person name="Broadbent J.R."/>
            <person name="Hutkins R."/>
            <person name="O'Sullivan D."/>
            <person name="Steele J."/>
            <person name="Unlu G."/>
            <person name="Saier M.H. Jr."/>
            <person name="Klaenhammer T."/>
            <person name="Richardson P."/>
            <person name="Kozyavkin S."/>
            <person name="Weimer B.C."/>
            <person name="Mills D.A."/>
        </authorList>
    </citation>
    <scope>NUCLEOTIDE SEQUENCE [LARGE SCALE GENOMIC DNA]</scope>
    <source>
        <strain>ATCC 8293 / DSM 20343 / BCRC 11652 / CCM 1803 / JCM 6124 / NCDO 523 / NBRC 100496 / NCIMB 8023 / NCTC 12954 / NRRL B-1118 / 37Y</strain>
    </source>
</reference>
<proteinExistence type="inferred from homology"/>
<keyword id="KW-0240">DNA-directed RNA polymerase</keyword>
<keyword id="KW-0548">Nucleotidyltransferase</keyword>
<keyword id="KW-1185">Reference proteome</keyword>
<keyword id="KW-0804">Transcription</keyword>
<keyword id="KW-0808">Transferase</keyword>
<evidence type="ECO:0000255" key="1">
    <source>
        <dbReference type="HAMAP-Rule" id="MF_01553"/>
    </source>
</evidence>
<feature type="chain" id="PRO_1000068874" description="DNA-directed RNA polymerase subunit epsilon">
    <location>
        <begin position="1"/>
        <end position="70"/>
    </location>
</feature>
<comment type="function">
    <text evidence="1">A non-essential component of RNA polymerase (RNAP).</text>
</comment>
<comment type="catalytic activity">
    <reaction evidence="1">
        <text>RNA(n) + a ribonucleoside 5'-triphosphate = RNA(n+1) + diphosphate</text>
        <dbReference type="Rhea" id="RHEA:21248"/>
        <dbReference type="Rhea" id="RHEA-COMP:14527"/>
        <dbReference type="Rhea" id="RHEA-COMP:17342"/>
        <dbReference type="ChEBI" id="CHEBI:33019"/>
        <dbReference type="ChEBI" id="CHEBI:61557"/>
        <dbReference type="ChEBI" id="CHEBI:140395"/>
        <dbReference type="EC" id="2.7.7.6"/>
    </reaction>
</comment>
<comment type="subunit">
    <text evidence="1">RNAP is composed of a core of 2 alpha, a beta and a beta' subunit. The core is associated with a delta subunit, and at least one of epsilon or omega. When a sigma factor is associated with the core the holoenzyme is formed, which can initiate transcription.</text>
</comment>
<comment type="similarity">
    <text evidence="1">Belongs to the RNA polymerase subunit epsilon family.</text>
</comment>
<protein>
    <recommendedName>
        <fullName evidence="1">DNA-directed RNA polymerase subunit epsilon</fullName>
        <shortName evidence="1">RNAP epsilon subunit</shortName>
        <ecNumber evidence="1">2.7.7.6</ecNumber>
    </recommendedName>
    <alternativeName>
        <fullName evidence="1">RNA polymerase epsilon subunit</fullName>
    </alternativeName>
    <alternativeName>
        <fullName evidence="1">Transcriptase subunit epsilon</fullName>
    </alternativeName>
</protein>
<sequence length="70" mass="8425">MIYKIYYQEHPERNPKRETTISMYIEAESLPQAREIIEENTEYNVEFIEELSDKAVTYEKANPNFEVTTF</sequence>
<gene>
    <name evidence="1" type="primary">rpoY</name>
    <name type="ordered locus">LEUM_1622</name>
</gene>
<organism>
    <name type="scientific">Leuconostoc mesenteroides subsp. mesenteroides (strain ATCC 8293 / DSM 20343 / BCRC 11652 / CCM 1803 / JCM 6124 / NCDO 523 / NBRC 100496 / NCIMB 8023 / NCTC 12954 / NRRL B-1118 / 37Y)</name>
    <dbReference type="NCBI Taxonomy" id="203120"/>
    <lineage>
        <taxon>Bacteria</taxon>
        <taxon>Bacillati</taxon>
        <taxon>Bacillota</taxon>
        <taxon>Bacilli</taxon>
        <taxon>Lactobacillales</taxon>
        <taxon>Lactobacillaceae</taxon>
        <taxon>Leuconostoc</taxon>
    </lineage>
</organism>